<evidence type="ECO:0000255" key="1">
    <source>
        <dbReference type="HAMAP-Rule" id="MF_00385"/>
    </source>
</evidence>
<evidence type="ECO:0000305" key="2"/>
<comment type="similarity">
    <text evidence="1">Belongs to the bacterial ribosomal protein bS16 family.</text>
</comment>
<accession>A4IM72</accession>
<organism>
    <name type="scientific">Geobacillus thermodenitrificans (strain NG80-2)</name>
    <dbReference type="NCBI Taxonomy" id="420246"/>
    <lineage>
        <taxon>Bacteria</taxon>
        <taxon>Bacillati</taxon>
        <taxon>Bacillota</taxon>
        <taxon>Bacilli</taxon>
        <taxon>Bacillales</taxon>
        <taxon>Anoxybacillaceae</taxon>
        <taxon>Geobacillus</taxon>
    </lineage>
</organism>
<feature type="chain" id="PRO_1000049262" description="Small ribosomal subunit protein bS16">
    <location>
        <begin position="1"/>
        <end position="90"/>
    </location>
</feature>
<sequence length="90" mass="10242">MAVKIRLKRMGAKKNPFYRIVVADSRSPRDGRFIETIGTYNPVAEPAEIKINEELALKWLQNGAKPSDTVRSLLSKQGILEKFHNLKYGK</sequence>
<reference key="1">
    <citation type="journal article" date="2007" name="Proc. Natl. Acad. Sci. U.S.A.">
        <title>Genome and proteome of long-chain alkane degrading Geobacillus thermodenitrificans NG80-2 isolated from a deep-subsurface oil reservoir.</title>
        <authorList>
            <person name="Feng L."/>
            <person name="Wang W."/>
            <person name="Cheng J."/>
            <person name="Ren Y."/>
            <person name="Zhao G."/>
            <person name="Gao C."/>
            <person name="Tang Y."/>
            <person name="Liu X."/>
            <person name="Han W."/>
            <person name="Peng X."/>
            <person name="Liu R."/>
            <person name="Wang L."/>
        </authorList>
    </citation>
    <scope>NUCLEOTIDE SEQUENCE [LARGE SCALE GENOMIC DNA]</scope>
    <source>
        <strain>NG80-2</strain>
    </source>
</reference>
<name>RS16_GEOTN</name>
<dbReference type="EMBL" id="CP000557">
    <property type="protein sequence ID" value="ABO66426.1"/>
    <property type="molecule type" value="Genomic_DNA"/>
</dbReference>
<dbReference type="RefSeq" id="WP_008878614.1">
    <property type="nucleotide sequence ID" value="NC_009328.1"/>
</dbReference>
<dbReference type="SMR" id="A4IM72"/>
<dbReference type="GeneID" id="87621357"/>
<dbReference type="KEGG" id="gtn:GTNG_1050"/>
<dbReference type="eggNOG" id="COG0228">
    <property type="taxonomic scope" value="Bacteria"/>
</dbReference>
<dbReference type="HOGENOM" id="CLU_100590_5_0_9"/>
<dbReference type="Proteomes" id="UP000001578">
    <property type="component" value="Chromosome"/>
</dbReference>
<dbReference type="GO" id="GO:0005737">
    <property type="term" value="C:cytoplasm"/>
    <property type="evidence" value="ECO:0007669"/>
    <property type="project" value="UniProtKB-ARBA"/>
</dbReference>
<dbReference type="GO" id="GO:0015935">
    <property type="term" value="C:small ribosomal subunit"/>
    <property type="evidence" value="ECO:0007669"/>
    <property type="project" value="TreeGrafter"/>
</dbReference>
<dbReference type="GO" id="GO:0003735">
    <property type="term" value="F:structural constituent of ribosome"/>
    <property type="evidence" value="ECO:0007669"/>
    <property type="project" value="InterPro"/>
</dbReference>
<dbReference type="GO" id="GO:0006412">
    <property type="term" value="P:translation"/>
    <property type="evidence" value="ECO:0007669"/>
    <property type="project" value="UniProtKB-UniRule"/>
</dbReference>
<dbReference type="FunFam" id="3.30.1320.10:FF:000002">
    <property type="entry name" value="30S ribosomal protein S16"/>
    <property type="match status" value="1"/>
</dbReference>
<dbReference type="Gene3D" id="3.30.1320.10">
    <property type="match status" value="1"/>
</dbReference>
<dbReference type="HAMAP" id="MF_00385">
    <property type="entry name" value="Ribosomal_bS16"/>
    <property type="match status" value="1"/>
</dbReference>
<dbReference type="InterPro" id="IPR000307">
    <property type="entry name" value="Ribosomal_bS16"/>
</dbReference>
<dbReference type="InterPro" id="IPR020592">
    <property type="entry name" value="Ribosomal_bS16_CS"/>
</dbReference>
<dbReference type="InterPro" id="IPR023803">
    <property type="entry name" value="Ribosomal_bS16_dom_sf"/>
</dbReference>
<dbReference type="NCBIfam" id="TIGR00002">
    <property type="entry name" value="S16"/>
    <property type="match status" value="1"/>
</dbReference>
<dbReference type="PANTHER" id="PTHR12919">
    <property type="entry name" value="30S RIBOSOMAL PROTEIN S16"/>
    <property type="match status" value="1"/>
</dbReference>
<dbReference type="PANTHER" id="PTHR12919:SF20">
    <property type="entry name" value="SMALL RIBOSOMAL SUBUNIT PROTEIN BS16M"/>
    <property type="match status" value="1"/>
</dbReference>
<dbReference type="Pfam" id="PF00886">
    <property type="entry name" value="Ribosomal_S16"/>
    <property type="match status" value="1"/>
</dbReference>
<dbReference type="SUPFAM" id="SSF54565">
    <property type="entry name" value="Ribosomal protein S16"/>
    <property type="match status" value="1"/>
</dbReference>
<dbReference type="PROSITE" id="PS00732">
    <property type="entry name" value="RIBOSOMAL_S16"/>
    <property type="match status" value="1"/>
</dbReference>
<proteinExistence type="inferred from homology"/>
<keyword id="KW-0687">Ribonucleoprotein</keyword>
<keyword id="KW-0689">Ribosomal protein</keyword>
<protein>
    <recommendedName>
        <fullName evidence="1">Small ribosomal subunit protein bS16</fullName>
    </recommendedName>
    <alternativeName>
        <fullName evidence="2">30S ribosomal protein S16</fullName>
    </alternativeName>
</protein>
<gene>
    <name evidence="1" type="primary">rpsP</name>
    <name type="ordered locus">GTNG_1050</name>
</gene>